<gene>
    <name type="primary">cpyA</name>
    <name type="ORF">Pc22g00890</name>
</gene>
<name>CBPYA_PENRW</name>
<comment type="function">
    <text evidence="1">Vacuolar carboxypeptidase involved in degradation of small peptides. Digests preferentially peptides containing an aliphatic or hydrophobic residue in P1' position, as well as methionine, leucine or phenylalanine in P1 position of ester substrate (By similarity).</text>
</comment>
<comment type="catalytic activity">
    <reaction evidence="3">
        <text>Release of a C-terminal amino acid with broad specificity.</text>
        <dbReference type="EC" id="3.4.16.5"/>
    </reaction>
</comment>
<comment type="subcellular location">
    <subcellularLocation>
        <location evidence="1">Vacuole</location>
    </subcellularLocation>
</comment>
<comment type="similarity">
    <text evidence="4">Belongs to the peptidase S10 family.</text>
</comment>
<proteinExistence type="inferred from homology"/>
<feature type="signal peptide" evidence="2">
    <location>
        <begin position="1"/>
        <end position="17"/>
    </location>
</feature>
<feature type="propeptide" id="PRO_0000407467" evidence="1">
    <location>
        <begin position="18"/>
        <end position="131"/>
    </location>
</feature>
<feature type="chain" id="PRO_5000410069" description="Carboxypeptidase Y homolog A">
    <location>
        <begin position="132"/>
        <end position="550"/>
    </location>
</feature>
<feature type="active site" evidence="3">
    <location>
        <position position="273"/>
    </location>
</feature>
<feature type="active site" evidence="3">
    <location>
        <position position="465"/>
    </location>
</feature>
<feature type="active site" evidence="3">
    <location>
        <position position="527"/>
    </location>
</feature>
<feature type="glycosylation site" description="N-linked (GlcNAc...) asparagine" evidence="2">
    <location>
        <position position="217"/>
    </location>
</feature>
<feature type="glycosylation site" description="N-linked (GlcNAc...) asparagine" evidence="2">
    <location>
        <position position="516"/>
    </location>
</feature>
<feature type="disulfide bond" evidence="1">
    <location>
        <begin position="186"/>
        <end position="426"/>
    </location>
</feature>
<feature type="disulfide bond" evidence="1">
    <location>
        <begin position="320"/>
        <end position="334"/>
    </location>
</feature>
<feature type="disulfide bond" evidence="1">
    <location>
        <begin position="344"/>
        <end position="367"/>
    </location>
</feature>
<feature type="disulfide bond" evidence="1">
    <location>
        <begin position="351"/>
        <end position="360"/>
    </location>
</feature>
<feature type="disulfide bond" evidence="1">
    <location>
        <begin position="389"/>
        <end position="396"/>
    </location>
</feature>
<sequence length="550" mass="61428">MRVLSATLLAGAASAAAPPFQQVLGAHKEYAENVIQQGADAFKPLQHLQDQFKSLSGEARQLWEEVSNYFPESMESAPLLSLPKKHTRRPDSHWDYHVSGAEVQDIWVSGAEGTKEREVDGRLEAYNLRAKKVDPSALGIDPGVKQYSGYLDDDENDKHLFYWFFESRNDPKNDPVVLWLNGGPGCSSLTGLFMELGPSSIDSKIKPVYNDFSWNNNASVIFLDQPINVGYSYSGGSVSDTVAAGKDVYALLTLFFKQFPEYATQDFHIAGESYAGHYIPVMASEILSHKKRNINLKSVLIGNGLTDGLTQYGYYRPMACGEGGYPAVLDESTCQSMDNSLSRCQSMIQACYNSESPWVCVPASIYCNNAMLGPYQRTGQNVYDIRGKCEDESNLCYKGMGYVSEYLGQESVREAVGAEVDGYDSCNFDINRNFLFNGDWFKPYHRLVPGLLEQIPVLIYAGDADFICNWLGNKAWSEALEWPGQKEFASAELEDLKIVQNEHVGKKIGQIKSHGNFTFMRIYGGGHMVPMDQPESGLEFFNRWIGGEWF</sequence>
<evidence type="ECO:0000250" key="1"/>
<evidence type="ECO:0000255" key="2"/>
<evidence type="ECO:0000255" key="3">
    <source>
        <dbReference type="PROSITE-ProRule" id="PRU10074"/>
    </source>
</evidence>
<evidence type="ECO:0000305" key="4"/>
<accession>B6HPP6</accession>
<keyword id="KW-0121">Carboxypeptidase</keyword>
<keyword id="KW-1015">Disulfide bond</keyword>
<keyword id="KW-0325">Glycoprotein</keyword>
<keyword id="KW-0378">Hydrolase</keyword>
<keyword id="KW-0645">Protease</keyword>
<keyword id="KW-1185">Reference proteome</keyword>
<keyword id="KW-0732">Signal</keyword>
<keyword id="KW-0926">Vacuole</keyword>
<keyword id="KW-0865">Zymogen</keyword>
<protein>
    <recommendedName>
        <fullName>Carboxypeptidase Y homolog A</fullName>
        <ecNumber>3.4.16.5</ecNumber>
    </recommendedName>
</protein>
<dbReference type="EC" id="3.4.16.5"/>
<dbReference type="EMBL" id="AM920437">
    <property type="protein sequence ID" value="CAP97377.1"/>
    <property type="molecule type" value="Genomic_DNA"/>
</dbReference>
<dbReference type="RefSeq" id="XP_002564134.1">
    <property type="nucleotide sequence ID" value="XM_002564088.1"/>
</dbReference>
<dbReference type="SMR" id="B6HPP6"/>
<dbReference type="STRING" id="500485.B6HPP6"/>
<dbReference type="ESTHER" id="penrw-cbpya">
    <property type="family name" value="Carboxypeptidase_S10"/>
</dbReference>
<dbReference type="MEROPS" id="S10.001"/>
<dbReference type="GlyCosmos" id="B6HPP6">
    <property type="glycosylation" value="2 sites, No reported glycans"/>
</dbReference>
<dbReference type="GeneID" id="8306581"/>
<dbReference type="KEGG" id="pcs:N7525_006094"/>
<dbReference type="VEuPathDB" id="FungiDB:PCH_Pc22g00890"/>
<dbReference type="eggNOG" id="KOG1282">
    <property type="taxonomic scope" value="Eukaryota"/>
</dbReference>
<dbReference type="HOGENOM" id="CLU_008523_10_4_1"/>
<dbReference type="OMA" id="GDWMKPF"/>
<dbReference type="OrthoDB" id="443318at2759"/>
<dbReference type="BioCyc" id="PCHR:PC22G00890-MONOMER"/>
<dbReference type="Proteomes" id="UP000000724">
    <property type="component" value="Contig Pc00c22"/>
</dbReference>
<dbReference type="GO" id="GO:0000324">
    <property type="term" value="C:fungal-type vacuole"/>
    <property type="evidence" value="ECO:0007669"/>
    <property type="project" value="TreeGrafter"/>
</dbReference>
<dbReference type="GO" id="GO:0004185">
    <property type="term" value="F:serine-type carboxypeptidase activity"/>
    <property type="evidence" value="ECO:0007669"/>
    <property type="project" value="UniProtKB-EC"/>
</dbReference>
<dbReference type="GO" id="GO:0017000">
    <property type="term" value="P:antibiotic biosynthetic process"/>
    <property type="evidence" value="ECO:0007669"/>
    <property type="project" value="UniProtKB-ARBA"/>
</dbReference>
<dbReference type="GO" id="GO:0072330">
    <property type="term" value="P:monocarboxylic acid biosynthetic process"/>
    <property type="evidence" value="ECO:0007669"/>
    <property type="project" value="UniProtKB-ARBA"/>
</dbReference>
<dbReference type="GO" id="GO:0006508">
    <property type="term" value="P:proteolysis"/>
    <property type="evidence" value="ECO:0007669"/>
    <property type="project" value="UniProtKB-KW"/>
</dbReference>
<dbReference type="FunFam" id="1.10.287.410:FF:000001">
    <property type="entry name" value="Carboxypeptidase Y"/>
    <property type="match status" value="1"/>
</dbReference>
<dbReference type="Gene3D" id="1.10.287.410">
    <property type="match status" value="1"/>
</dbReference>
<dbReference type="Gene3D" id="3.40.50.1820">
    <property type="entry name" value="alpha/beta hydrolase"/>
    <property type="match status" value="1"/>
</dbReference>
<dbReference type="InterPro" id="IPR029058">
    <property type="entry name" value="AB_hydrolase_fold"/>
</dbReference>
<dbReference type="InterPro" id="IPR001563">
    <property type="entry name" value="Peptidase_S10"/>
</dbReference>
<dbReference type="InterPro" id="IPR008442">
    <property type="entry name" value="Propeptide_carboxypepY"/>
</dbReference>
<dbReference type="InterPro" id="IPR018202">
    <property type="entry name" value="Ser_caboxypep_ser_AS"/>
</dbReference>
<dbReference type="PANTHER" id="PTHR11802:SF113">
    <property type="entry name" value="SERINE CARBOXYPEPTIDASE CTSA-4.1"/>
    <property type="match status" value="1"/>
</dbReference>
<dbReference type="PANTHER" id="PTHR11802">
    <property type="entry name" value="SERINE PROTEASE FAMILY S10 SERINE CARBOXYPEPTIDASE"/>
    <property type="match status" value="1"/>
</dbReference>
<dbReference type="Pfam" id="PF05388">
    <property type="entry name" value="Carbpep_Y_N"/>
    <property type="match status" value="1"/>
</dbReference>
<dbReference type="Pfam" id="PF00450">
    <property type="entry name" value="Peptidase_S10"/>
    <property type="match status" value="1"/>
</dbReference>
<dbReference type="PRINTS" id="PR00724">
    <property type="entry name" value="CRBOXYPTASEC"/>
</dbReference>
<dbReference type="SUPFAM" id="SSF53474">
    <property type="entry name" value="alpha/beta-Hydrolases"/>
    <property type="match status" value="1"/>
</dbReference>
<dbReference type="PROSITE" id="PS00131">
    <property type="entry name" value="CARBOXYPEPT_SER_SER"/>
    <property type="match status" value="1"/>
</dbReference>
<organism>
    <name type="scientific">Penicillium rubens (strain ATCC 28089 / DSM 1075 / NRRL 1951 / Wisconsin 54-1255)</name>
    <name type="common">Penicillium chrysogenum</name>
    <dbReference type="NCBI Taxonomy" id="500485"/>
    <lineage>
        <taxon>Eukaryota</taxon>
        <taxon>Fungi</taxon>
        <taxon>Dikarya</taxon>
        <taxon>Ascomycota</taxon>
        <taxon>Pezizomycotina</taxon>
        <taxon>Eurotiomycetes</taxon>
        <taxon>Eurotiomycetidae</taxon>
        <taxon>Eurotiales</taxon>
        <taxon>Aspergillaceae</taxon>
        <taxon>Penicillium</taxon>
        <taxon>Penicillium chrysogenum species complex</taxon>
    </lineage>
</organism>
<reference key="1">
    <citation type="journal article" date="2008" name="Nat. Biotechnol.">
        <title>Genome sequencing and analysis of the filamentous fungus Penicillium chrysogenum.</title>
        <authorList>
            <person name="van den Berg M.A."/>
            <person name="Albang R."/>
            <person name="Albermann K."/>
            <person name="Badger J.H."/>
            <person name="Daran J.-M."/>
            <person name="Driessen A.J.M."/>
            <person name="Garcia-Estrada C."/>
            <person name="Fedorova N.D."/>
            <person name="Harris D.M."/>
            <person name="Heijne W.H.M."/>
            <person name="Joardar V.S."/>
            <person name="Kiel J.A.K.W."/>
            <person name="Kovalchuk A."/>
            <person name="Martin J.F."/>
            <person name="Nierman W.C."/>
            <person name="Nijland J.G."/>
            <person name="Pronk J.T."/>
            <person name="Roubos J.A."/>
            <person name="van der Klei I.J."/>
            <person name="van Peij N.N.M.E."/>
            <person name="Veenhuis M."/>
            <person name="von Doehren H."/>
            <person name="Wagner C."/>
            <person name="Wortman J.R."/>
            <person name="Bovenberg R.A.L."/>
        </authorList>
    </citation>
    <scope>NUCLEOTIDE SEQUENCE [LARGE SCALE GENOMIC DNA]</scope>
    <source>
        <strain>ATCC 28089 / DSM 1075 / NRRL 1951 / Wisconsin 54-1255</strain>
    </source>
</reference>